<evidence type="ECO:0000256" key="1">
    <source>
        <dbReference type="SAM" id="MobiDB-lite"/>
    </source>
</evidence>
<evidence type="ECO:0000269" key="2">
    <source>
    </source>
</evidence>
<evidence type="ECO:0000269" key="3">
    <source>
    </source>
</evidence>
<evidence type="ECO:0000269" key="4">
    <source>
    </source>
</evidence>
<evidence type="ECO:0000269" key="5">
    <source>
    </source>
</evidence>
<evidence type="ECO:0000269" key="6">
    <source>
    </source>
</evidence>
<evidence type="ECO:0000303" key="7">
    <source>
    </source>
</evidence>
<evidence type="ECO:0000303" key="8">
    <source>
    </source>
</evidence>
<evidence type="ECO:0000305" key="9"/>
<evidence type="ECO:0007744" key="10">
    <source>
    </source>
</evidence>
<evidence type="ECO:0007744" key="11">
    <source>
    </source>
</evidence>
<evidence type="ECO:0007744" key="12">
    <source>
    </source>
</evidence>
<evidence type="ECO:0007829" key="13">
    <source>
        <dbReference type="PDB" id="8TLK"/>
    </source>
</evidence>
<proteinExistence type="evidence at protein level"/>
<dbReference type="EMBL" id="AY029179">
    <property type="protein sequence ID" value="AAK31591.1"/>
    <property type="molecule type" value="mRNA"/>
</dbReference>
<dbReference type="EMBL" id="AK027628">
    <property type="protein sequence ID" value="BAB55245.1"/>
    <property type="molecule type" value="mRNA"/>
</dbReference>
<dbReference type="EMBL" id="AK027642">
    <property type="protein sequence ID" value="BAB55258.1"/>
    <property type="molecule type" value="mRNA"/>
</dbReference>
<dbReference type="EMBL" id="AK075134">
    <property type="protein sequence ID" value="BAC11425.1"/>
    <property type="molecule type" value="mRNA"/>
</dbReference>
<dbReference type="EMBL" id="AK297097">
    <property type="protein sequence ID" value="BAG59610.1"/>
    <property type="molecule type" value="mRNA"/>
</dbReference>
<dbReference type="EMBL" id="AK300949">
    <property type="protein sequence ID" value="BAG62578.1"/>
    <property type="molecule type" value="mRNA"/>
</dbReference>
<dbReference type="EMBL" id="AK223524">
    <property type="protein sequence ID" value="BAD97244.1"/>
    <property type="molecule type" value="mRNA"/>
</dbReference>
<dbReference type="EMBL" id="AL833728">
    <property type="protein sequence ID" value="CAH56253.1"/>
    <property type="molecule type" value="mRNA"/>
</dbReference>
<dbReference type="EMBL" id="AL834186">
    <property type="protein sequence ID" value="CAH56357.1"/>
    <property type="status" value="ALT_FRAME"/>
    <property type="molecule type" value="mRNA"/>
</dbReference>
<dbReference type="EMBL" id="AC092573">
    <property type="protein sequence ID" value="AAX82003.1"/>
    <property type="molecule type" value="Genomic_DNA"/>
</dbReference>
<dbReference type="EMBL" id="BC015124">
    <property type="protein sequence ID" value="AAH15124.1"/>
    <property type="molecule type" value="mRNA"/>
</dbReference>
<dbReference type="EMBL" id="BC027966">
    <property type="protein sequence ID" value="AAH27966.1"/>
    <property type="molecule type" value="mRNA"/>
</dbReference>
<dbReference type="EMBL" id="BG354580">
    <property type="status" value="NOT_ANNOTATED_CDS"/>
    <property type="molecule type" value="mRNA"/>
</dbReference>
<dbReference type="CCDS" id="CCDS2252.1">
    <molecule id="Q9BWT1-2"/>
</dbReference>
<dbReference type="CCDS" id="CCDS2253.1">
    <molecule id="Q9BWT1-1"/>
</dbReference>
<dbReference type="RefSeq" id="NP_114148.3">
    <molecule id="Q9BWT1-2"/>
    <property type="nucleotide sequence ID" value="NM_031942.4"/>
</dbReference>
<dbReference type="RefSeq" id="NP_665809.1">
    <molecule id="Q9BWT1-1"/>
    <property type="nucleotide sequence ID" value="NM_145810.3"/>
</dbReference>
<dbReference type="PDB" id="8TLK">
    <property type="method" value="X-ray"/>
    <property type="resolution" value="2.99 A"/>
    <property type="chains" value="A/B=232-371"/>
</dbReference>
<dbReference type="PDB" id="8YV8">
    <property type="method" value="EM"/>
    <property type="resolution" value="3.00 A"/>
    <property type="chains" value="K=264-371"/>
</dbReference>
<dbReference type="PDBsum" id="8TLK"/>
<dbReference type="PDBsum" id="8YV8"/>
<dbReference type="EMDB" id="EMD-39594"/>
<dbReference type="SMR" id="Q9BWT1"/>
<dbReference type="BioGRID" id="123792">
    <property type="interactions" value="12"/>
</dbReference>
<dbReference type="FunCoup" id="Q9BWT1">
    <property type="interactions" value="2971"/>
</dbReference>
<dbReference type="IntAct" id="Q9BWT1">
    <property type="interactions" value="6"/>
</dbReference>
<dbReference type="MINT" id="Q9BWT1"/>
<dbReference type="STRING" id="9606.ENSP00000306968"/>
<dbReference type="GlyGen" id="Q9BWT1">
    <property type="glycosylation" value="1 site, 1 O-linked glycan (1 site)"/>
</dbReference>
<dbReference type="iPTMnet" id="Q9BWT1"/>
<dbReference type="PhosphoSitePlus" id="Q9BWT1"/>
<dbReference type="BioMuta" id="CDCA7"/>
<dbReference type="DMDM" id="74733461"/>
<dbReference type="jPOST" id="Q9BWT1"/>
<dbReference type="MassIVE" id="Q9BWT1"/>
<dbReference type="PeptideAtlas" id="Q9BWT1"/>
<dbReference type="ProteomicsDB" id="4548"/>
<dbReference type="ProteomicsDB" id="5247"/>
<dbReference type="ProteomicsDB" id="79309">
    <molecule id="Q9BWT1-1"/>
</dbReference>
<dbReference type="ProteomicsDB" id="79310">
    <molecule id="Q9BWT1-2"/>
</dbReference>
<dbReference type="ProteomicsDB" id="79311">
    <molecule id="Q9BWT1-3"/>
</dbReference>
<dbReference type="ProteomicsDB" id="79312">
    <molecule id="Q9BWT1-4"/>
</dbReference>
<dbReference type="Pumba" id="Q9BWT1"/>
<dbReference type="Antibodypedia" id="1585">
    <property type="antibodies" value="102 antibodies from 23 providers"/>
</dbReference>
<dbReference type="DNASU" id="83879"/>
<dbReference type="Ensembl" id="ENST00000306721.8">
    <molecule id="Q9BWT1-2"/>
    <property type="protein sequence ID" value="ENSP00000306968.3"/>
    <property type="gene ID" value="ENSG00000144354.15"/>
</dbReference>
<dbReference type="Ensembl" id="ENST00000347703.7">
    <molecule id="Q9BWT1-1"/>
    <property type="protein sequence ID" value="ENSP00000272789.4"/>
    <property type="gene ID" value="ENSG00000144354.15"/>
</dbReference>
<dbReference type="Ensembl" id="ENST00000410019.3">
    <molecule id="Q9BWT1-5"/>
    <property type="protein sequence ID" value="ENSP00000386833.3"/>
    <property type="gene ID" value="ENSG00000144354.15"/>
</dbReference>
<dbReference type="Ensembl" id="ENST00000410101.7">
    <molecule id="Q9BWT1-6"/>
    <property type="protein sequence ID" value="ENSP00000386656.3"/>
    <property type="gene ID" value="ENSG00000144354.15"/>
</dbReference>
<dbReference type="Ensembl" id="ENST00000695901.1">
    <molecule id="Q9BWT1-3"/>
    <property type="protein sequence ID" value="ENSP00000512251.1"/>
    <property type="gene ID" value="ENSG00000144354.15"/>
</dbReference>
<dbReference type="GeneID" id="83879"/>
<dbReference type="KEGG" id="hsa:83879"/>
<dbReference type="MANE-Select" id="ENST00000306721.8">
    <molecule id="Q9BWT1-2"/>
    <property type="protein sequence ID" value="ENSP00000306968.3"/>
    <property type="RefSeq nucleotide sequence ID" value="NM_031942.5"/>
    <property type="RefSeq protein sequence ID" value="NP_114148.3"/>
</dbReference>
<dbReference type="UCSC" id="uc002uic.2">
    <molecule id="Q9BWT1-1"/>
    <property type="organism name" value="human"/>
</dbReference>
<dbReference type="AGR" id="HGNC:14628"/>
<dbReference type="CTD" id="83879"/>
<dbReference type="DisGeNET" id="83879"/>
<dbReference type="GeneCards" id="CDCA7"/>
<dbReference type="HGNC" id="HGNC:14628">
    <property type="gene designation" value="CDCA7"/>
</dbReference>
<dbReference type="HPA" id="ENSG00000144354">
    <property type="expression patterns" value="Tissue enhanced (intestine, lymphoid tissue)"/>
</dbReference>
<dbReference type="MalaCards" id="CDCA7"/>
<dbReference type="MIM" id="609937">
    <property type="type" value="gene"/>
</dbReference>
<dbReference type="MIM" id="616910">
    <property type="type" value="phenotype"/>
</dbReference>
<dbReference type="neXtProt" id="NX_Q9BWT1"/>
<dbReference type="OpenTargets" id="ENSG00000144354"/>
<dbReference type="Orphanet" id="2268">
    <property type="disease" value="ICF syndrome"/>
</dbReference>
<dbReference type="PharmGKB" id="PA26280"/>
<dbReference type="VEuPathDB" id="HostDB:ENSG00000144354"/>
<dbReference type="eggNOG" id="ENOG502QQPE">
    <property type="taxonomic scope" value="Eukaryota"/>
</dbReference>
<dbReference type="GeneTree" id="ENSGT00940000155436"/>
<dbReference type="HOGENOM" id="CLU_035988_2_0_1"/>
<dbReference type="InParanoid" id="Q9BWT1"/>
<dbReference type="OMA" id="DCWGIRG"/>
<dbReference type="OrthoDB" id="298344at2759"/>
<dbReference type="PAN-GO" id="Q9BWT1">
    <property type="GO annotations" value="1 GO annotation based on evolutionary models"/>
</dbReference>
<dbReference type="PhylomeDB" id="Q9BWT1"/>
<dbReference type="TreeFam" id="TF101076"/>
<dbReference type="PathwayCommons" id="Q9BWT1"/>
<dbReference type="SignaLink" id="Q9BWT1"/>
<dbReference type="SIGNOR" id="Q9BWT1"/>
<dbReference type="BioGRID-ORCS" id="83879">
    <property type="hits" value="14 hits in 1161 CRISPR screens"/>
</dbReference>
<dbReference type="ChiTaRS" id="CDCA7">
    <property type="organism name" value="human"/>
</dbReference>
<dbReference type="GeneWiki" id="CDCA7"/>
<dbReference type="GenomeRNAi" id="83879"/>
<dbReference type="Pharos" id="Q9BWT1">
    <property type="development level" value="Tbio"/>
</dbReference>
<dbReference type="PRO" id="PR:Q9BWT1"/>
<dbReference type="Proteomes" id="UP000005640">
    <property type="component" value="Chromosome 2"/>
</dbReference>
<dbReference type="RNAct" id="Q9BWT1">
    <property type="molecule type" value="protein"/>
</dbReference>
<dbReference type="Bgee" id="ENSG00000144354">
    <property type="expression patterns" value="Expressed in ileal mucosa and 148 other cell types or tissues"/>
</dbReference>
<dbReference type="ExpressionAtlas" id="Q9BWT1">
    <property type="expression patterns" value="baseline and differential"/>
</dbReference>
<dbReference type="GO" id="GO:0005829">
    <property type="term" value="C:cytosol"/>
    <property type="evidence" value="ECO:0000314"/>
    <property type="project" value="HPA"/>
</dbReference>
<dbReference type="GO" id="GO:0005654">
    <property type="term" value="C:nucleoplasm"/>
    <property type="evidence" value="ECO:0000314"/>
    <property type="project" value="HPA"/>
</dbReference>
<dbReference type="GO" id="GO:0005634">
    <property type="term" value="C:nucleus"/>
    <property type="evidence" value="ECO:0000314"/>
    <property type="project" value="MGI"/>
</dbReference>
<dbReference type="GO" id="GO:0006915">
    <property type="term" value="P:apoptotic process"/>
    <property type="evidence" value="ECO:0007669"/>
    <property type="project" value="UniProtKB-KW"/>
</dbReference>
<dbReference type="GO" id="GO:0042127">
    <property type="term" value="P:regulation of cell population proliferation"/>
    <property type="evidence" value="ECO:0000314"/>
    <property type="project" value="MGI"/>
</dbReference>
<dbReference type="GO" id="GO:0006355">
    <property type="term" value="P:regulation of DNA-templated transcription"/>
    <property type="evidence" value="ECO:0007669"/>
    <property type="project" value="InterPro"/>
</dbReference>
<dbReference type="InterPro" id="IPR040221">
    <property type="entry name" value="CDCA7/CDA7L"/>
</dbReference>
<dbReference type="InterPro" id="IPR018866">
    <property type="entry name" value="Znf-4CXXC_R1"/>
</dbReference>
<dbReference type="PANTHER" id="PTHR31169:SF2">
    <property type="entry name" value="CELL DIVISION CYCLE-ASSOCIATED PROTEIN 7"/>
    <property type="match status" value="1"/>
</dbReference>
<dbReference type="PANTHER" id="PTHR31169">
    <property type="entry name" value="OS05G0300700 PROTEIN"/>
    <property type="match status" value="1"/>
</dbReference>
<dbReference type="Pfam" id="PF10497">
    <property type="entry name" value="zf-4CXXC_R1"/>
    <property type="match status" value="1"/>
</dbReference>
<sequence length="371" mass="42573">MDARRVPQKDLRVKKNLKKFRYVKLISMETSSSSDDSCDSFASDNFANTRLQSVREGCRTRSQCRHSGPLRVAMKFPARSTRGATNKKAESRQPSENSVTDSNSDSEDESGMNFLEKRALNIKQNKAMLAKLMSELESFPGSFRGRHPLPGSDSQSRRPRRRTFPGVASRRNPERRARPLTRSRSRILGSLDALPMEEEEEEDKYMLVRKRKTVDGYMNEDDLPRSRRSRSSVTLPHIIRPVEEITEEELENVCSNSREKIYNRSLGSTCHQCRQKTIDTKTNCRNPDCWGVRGQFCGPCLRNRYGEEVRDALLDPNWHCPPCRGICNCSFCRQRDGRCATGVLVYLAKYHGFGNVHAYLKSLKQEFEMQA</sequence>
<accession>Q9BWT1</accession>
<accession>B4DLP8</accession>
<accession>B4DV66</accession>
<accession>Q53EW5</accession>
<accession>Q580W9</accession>
<accession>Q658K4</accession>
<accession>Q658N4</accession>
<accession>Q8NBY9</accession>
<accession>Q96BV8</accession>
<accession>Q96SP5</accession>
<name>CDCA7_HUMAN</name>
<organism>
    <name type="scientific">Homo sapiens</name>
    <name type="common">Human</name>
    <dbReference type="NCBI Taxonomy" id="9606"/>
    <lineage>
        <taxon>Eukaryota</taxon>
        <taxon>Metazoa</taxon>
        <taxon>Chordata</taxon>
        <taxon>Craniata</taxon>
        <taxon>Vertebrata</taxon>
        <taxon>Euteleostomi</taxon>
        <taxon>Mammalia</taxon>
        <taxon>Eutheria</taxon>
        <taxon>Euarchontoglires</taxon>
        <taxon>Primates</taxon>
        <taxon>Haplorrhini</taxon>
        <taxon>Catarrhini</taxon>
        <taxon>Hominidae</taxon>
        <taxon>Homo</taxon>
    </lineage>
</organism>
<comment type="function">
    <text evidence="2 3 4 5">Participates in MYC-mediated cell transformation and apoptosis; induces anchorage-independent growth and clonogenicity in lymphoblastoid cells. Insufficient to induce tumorigenicity when overexpressed but contributes to MYC-mediated tumorigenesis. May play a role as transcriptional regulator.</text>
</comment>
<comment type="subunit">
    <text evidence="5">Interacts with MYC (via C-terminus), YWHAE and YWHAZ.</text>
</comment>
<comment type="interaction">
    <interactant intactId="EBI-7054803">
        <id>Q9BWT1</id>
    </interactant>
    <interactant intactId="EBI-466029">
        <id>P42858</id>
        <label>HTT</label>
    </interactant>
    <organismsDiffer>false</organismsDiffer>
    <experiments>3</experiments>
</comment>
<comment type="interaction">
    <interactant intactId="EBI-7054803">
        <id>Q9BWT1</id>
    </interactant>
    <interactant intactId="EBI-720609">
        <id>O76024</id>
        <label>WFS1</label>
    </interactant>
    <organismsDiffer>false</organismsDiffer>
    <experiments>3</experiments>
</comment>
<comment type="subcellular location">
    <subcellularLocation>
        <location>Nucleus</location>
    </subcellularLocation>
    <subcellularLocation>
        <location>Cytoplasm</location>
    </subcellularLocation>
    <text>Predominantly nuclear with some expression also seen in the cytoplasm. Predominantly cytoplasmic when phosphorylated at Thr-163.</text>
</comment>
<comment type="alternative products">
    <event type="alternative splicing"/>
    <isoform>
        <id>Q9BWT1-1</id>
        <name>1</name>
        <name>isoform 2 variant</name>
        <sequence type="displayed"/>
    </isoform>
    <isoform>
        <id>Q9BWT1-2</id>
        <name>2</name>
        <sequence type="described" ref="VSP_020394"/>
    </isoform>
    <isoform>
        <id>Q9BWT1-3</id>
        <name>3</name>
        <sequence type="described" ref="VSP_020397"/>
    </isoform>
    <isoform>
        <id>Q9BWT1-4</id>
        <name>4</name>
        <sequence type="described" ref="VSP_020395 VSP_020396"/>
    </isoform>
    <isoform>
        <id>Q9BWT1-5</id>
        <name>5</name>
        <sequence type="described" ref="VSP_054407"/>
    </isoform>
    <isoform>
        <id>Q9BWT1-6</id>
        <name>6</name>
        <sequence type="described" ref="VSP_054408"/>
    </isoform>
</comment>
<comment type="tissue specificity">
    <text evidence="2 3">Ubiquitous with higher level in thymus and small intestine. Overexpressed in a large number of tumors, in blood from patients with acute myelogenous leukemia (AML) and in chronic myelogenous leukemia (CML) blast crisis.</text>
</comment>
<comment type="induction">
    <text>Activated by MYC and possibly E2F1.</text>
</comment>
<comment type="PTM">
    <text evidence="5">Phosphorylation at Thr-163 promotes interaction with YWHAE and YWHAZ, dissociation from MYC and sequestration in the cytoplasm. In vitro, phosphorylated at Thr-163 by AKT.</text>
</comment>
<comment type="disease" evidence="6">
    <disease id="DI-04704">
        <name>Immunodeficiency-centromeric instability-facial anomalies syndrome 3</name>
        <acronym>ICF3</acronym>
        <description>A rare disorder characterized by a variable immunodeficiency resulting in recurrent infections, facial anomalies, and branching of chromosomes 1, 9, and 16. Other variable symptoms include growth retardation, failure to thrive, and psychomotor retardation. Laboratory studies show limited hypomethylation of DNA in a small fraction of the genome in some, but not all, patients.</description>
        <dbReference type="MIM" id="616910"/>
    </disease>
    <text>The disease may be caused by variants affecting the gene represented in this entry.</text>
</comment>
<comment type="miscellaneous">
    <text>CDCA7 expression is correlated with MYC expression in lymphoblastoid, lymphoma and breast cancer cell lines.</text>
</comment>
<comment type="sequence caution" evidence="9">
    <conflict type="frameshift">
        <sequence resource="EMBL-CDS" id="CAH56357"/>
    </conflict>
</comment>
<keyword id="KW-0002">3D-structure</keyword>
<keyword id="KW-0025">Alternative splicing</keyword>
<keyword id="KW-0053">Apoptosis</keyword>
<keyword id="KW-0963">Cytoplasm</keyword>
<keyword id="KW-0225">Disease variant</keyword>
<keyword id="KW-1017">Isopeptide bond</keyword>
<keyword id="KW-0539">Nucleus</keyword>
<keyword id="KW-0597">Phosphoprotein</keyword>
<keyword id="KW-1267">Proteomics identification</keyword>
<keyword id="KW-1185">Reference proteome</keyword>
<keyword id="KW-0804">Transcription</keyword>
<keyword id="KW-0805">Transcription regulation</keyword>
<keyword id="KW-0832">Ubl conjugation</keyword>
<gene>
    <name type="primary">CDCA7</name>
    <name type="synonym">JPO1</name>
</gene>
<reference key="1">
    <citation type="journal article" date="2001" name="J. Biol. Chem.">
        <title>A novel c-Myc-responsive gene, JPO1, participates in neoplastic transformation.</title>
        <authorList>
            <person name="Prescott J.E."/>
            <person name="Osthus R.C."/>
            <person name="Lee L.A."/>
            <person name="Lewis B.C."/>
            <person name="Shim H."/>
            <person name="Barrett J.F."/>
            <person name="Guo Q."/>
            <person name="Hawkins A.L."/>
            <person name="Griffin C.A."/>
            <person name="Dang C.V."/>
        </authorList>
    </citation>
    <scope>NUCLEOTIDE SEQUENCE [MRNA] (ISOFORM 1)</scope>
    <scope>FUNCTION</scope>
    <scope>MISCELLANEOUS</scope>
    <scope>TISSUE SPECIFICITY</scope>
    <scope>SUBCELLULAR LOCATION</scope>
</reference>
<reference key="2">
    <citation type="journal article" date="2004" name="Nat. Genet.">
        <title>Complete sequencing and characterization of 21,243 full-length human cDNAs.</title>
        <authorList>
            <person name="Ota T."/>
            <person name="Suzuki Y."/>
            <person name="Nishikawa T."/>
            <person name="Otsuki T."/>
            <person name="Sugiyama T."/>
            <person name="Irie R."/>
            <person name="Wakamatsu A."/>
            <person name="Hayashi K."/>
            <person name="Sato H."/>
            <person name="Nagai K."/>
            <person name="Kimura K."/>
            <person name="Makita H."/>
            <person name="Sekine M."/>
            <person name="Obayashi M."/>
            <person name="Nishi T."/>
            <person name="Shibahara T."/>
            <person name="Tanaka T."/>
            <person name="Ishii S."/>
            <person name="Yamamoto J."/>
            <person name="Saito K."/>
            <person name="Kawai Y."/>
            <person name="Isono Y."/>
            <person name="Nakamura Y."/>
            <person name="Nagahari K."/>
            <person name="Murakami K."/>
            <person name="Yasuda T."/>
            <person name="Iwayanagi T."/>
            <person name="Wagatsuma M."/>
            <person name="Shiratori A."/>
            <person name="Sudo H."/>
            <person name="Hosoiri T."/>
            <person name="Kaku Y."/>
            <person name="Kodaira H."/>
            <person name="Kondo H."/>
            <person name="Sugawara M."/>
            <person name="Takahashi M."/>
            <person name="Kanda K."/>
            <person name="Yokoi T."/>
            <person name="Furuya T."/>
            <person name="Kikkawa E."/>
            <person name="Omura Y."/>
            <person name="Abe K."/>
            <person name="Kamihara K."/>
            <person name="Katsuta N."/>
            <person name="Sato K."/>
            <person name="Tanikawa M."/>
            <person name="Yamazaki M."/>
            <person name="Ninomiya K."/>
            <person name="Ishibashi T."/>
            <person name="Yamashita H."/>
            <person name="Murakawa K."/>
            <person name="Fujimori K."/>
            <person name="Tanai H."/>
            <person name="Kimata M."/>
            <person name="Watanabe M."/>
            <person name="Hiraoka S."/>
            <person name="Chiba Y."/>
            <person name="Ishida S."/>
            <person name="Ono Y."/>
            <person name="Takiguchi S."/>
            <person name="Watanabe S."/>
            <person name="Yosida M."/>
            <person name="Hotuta T."/>
            <person name="Kusano J."/>
            <person name="Kanehori K."/>
            <person name="Takahashi-Fujii A."/>
            <person name="Hara H."/>
            <person name="Tanase T.-O."/>
            <person name="Nomura Y."/>
            <person name="Togiya S."/>
            <person name="Komai F."/>
            <person name="Hara R."/>
            <person name="Takeuchi K."/>
            <person name="Arita M."/>
            <person name="Imose N."/>
            <person name="Musashino K."/>
            <person name="Yuuki H."/>
            <person name="Oshima A."/>
            <person name="Sasaki N."/>
            <person name="Aotsuka S."/>
            <person name="Yoshikawa Y."/>
            <person name="Matsunawa H."/>
            <person name="Ichihara T."/>
            <person name="Shiohata N."/>
            <person name="Sano S."/>
            <person name="Moriya S."/>
            <person name="Momiyama H."/>
            <person name="Satoh N."/>
            <person name="Takami S."/>
            <person name="Terashima Y."/>
            <person name="Suzuki O."/>
            <person name="Nakagawa S."/>
            <person name="Senoh A."/>
            <person name="Mizoguchi H."/>
            <person name="Goto Y."/>
            <person name="Shimizu F."/>
            <person name="Wakebe H."/>
            <person name="Hishigaki H."/>
            <person name="Watanabe T."/>
            <person name="Sugiyama A."/>
            <person name="Takemoto M."/>
            <person name="Kawakami B."/>
            <person name="Yamazaki M."/>
            <person name="Watanabe K."/>
            <person name="Kumagai A."/>
            <person name="Itakura S."/>
            <person name="Fukuzumi Y."/>
            <person name="Fujimori Y."/>
            <person name="Komiyama M."/>
            <person name="Tashiro H."/>
            <person name="Tanigami A."/>
            <person name="Fujiwara T."/>
            <person name="Ono T."/>
            <person name="Yamada K."/>
            <person name="Fujii Y."/>
            <person name="Ozaki K."/>
            <person name="Hirao M."/>
            <person name="Ohmori Y."/>
            <person name="Kawabata A."/>
            <person name="Hikiji T."/>
            <person name="Kobatake N."/>
            <person name="Inagaki H."/>
            <person name="Ikema Y."/>
            <person name="Okamoto S."/>
            <person name="Okitani R."/>
            <person name="Kawakami T."/>
            <person name="Noguchi S."/>
            <person name="Itoh T."/>
            <person name="Shigeta K."/>
            <person name="Senba T."/>
            <person name="Matsumura K."/>
            <person name="Nakajima Y."/>
            <person name="Mizuno T."/>
            <person name="Morinaga M."/>
            <person name="Sasaki M."/>
            <person name="Togashi T."/>
            <person name="Oyama M."/>
            <person name="Hata H."/>
            <person name="Watanabe M."/>
            <person name="Komatsu T."/>
            <person name="Mizushima-Sugano J."/>
            <person name="Satoh T."/>
            <person name="Shirai Y."/>
            <person name="Takahashi Y."/>
            <person name="Nakagawa K."/>
            <person name="Okumura K."/>
            <person name="Nagase T."/>
            <person name="Nomura N."/>
            <person name="Kikuchi H."/>
            <person name="Masuho Y."/>
            <person name="Yamashita R."/>
            <person name="Nakai K."/>
            <person name="Yada T."/>
            <person name="Nakamura Y."/>
            <person name="Ohara O."/>
            <person name="Isogai T."/>
            <person name="Sugano S."/>
        </authorList>
    </citation>
    <scope>NUCLEOTIDE SEQUENCE [LARGE SCALE MRNA] (ISOFORMS 1; 2; 4; 5 AND 6)</scope>
    <source>
        <tissue>Placenta</tissue>
        <tissue>Small intestine</tissue>
    </source>
</reference>
<reference key="3">
    <citation type="submission" date="2005-04" db="EMBL/GenBank/DDBJ databases">
        <authorList>
            <person name="Totoki Y."/>
            <person name="Toyoda A."/>
            <person name="Takeda T."/>
            <person name="Sakaki Y."/>
            <person name="Tanaka A."/>
            <person name="Yokoyama S."/>
        </authorList>
    </citation>
    <scope>NUCLEOTIDE SEQUENCE [LARGE SCALE MRNA] (ISOFORM 1)</scope>
</reference>
<reference key="4">
    <citation type="journal article" date="2007" name="BMC Genomics">
        <title>The full-ORF clone resource of the German cDNA consortium.</title>
        <authorList>
            <person name="Bechtel S."/>
            <person name="Rosenfelder H."/>
            <person name="Duda A."/>
            <person name="Schmidt C.P."/>
            <person name="Ernst U."/>
            <person name="Wellenreuther R."/>
            <person name="Mehrle A."/>
            <person name="Schuster C."/>
            <person name="Bahr A."/>
            <person name="Bloecker H."/>
            <person name="Heubner D."/>
            <person name="Hoerlein A."/>
            <person name="Michel G."/>
            <person name="Wedler H."/>
            <person name="Koehrer K."/>
            <person name="Ottenwaelder B."/>
            <person name="Poustka A."/>
            <person name="Wiemann S."/>
            <person name="Schupp I."/>
        </authorList>
    </citation>
    <scope>NUCLEOTIDE SEQUENCE [LARGE SCALE MRNA] (ISOFORM 3)</scope>
    <scope>NUCLEOTIDE SEQUENCE [LARGE SCALE MRNA] OF 155-371 (ISOFORM 1)</scope>
    <source>
        <tissue>Lymph node</tissue>
        <tissue>Stomach</tissue>
    </source>
</reference>
<reference key="5">
    <citation type="journal article" date="2005" name="Nature">
        <title>Generation and annotation of the DNA sequences of human chromosomes 2 and 4.</title>
        <authorList>
            <person name="Hillier L.W."/>
            <person name="Graves T.A."/>
            <person name="Fulton R.S."/>
            <person name="Fulton L.A."/>
            <person name="Pepin K.H."/>
            <person name="Minx P."/>
            <person name="Wagner-McPherson C."/>
            <person name="Layman D."/>
            <person name="Wylie K."/>
            <person name="Sekhon M."/>
            <person name="Becker M.C."/>
            <person name="Fewell G.A."/>
            <person name="Delehaunty K.D."/>
            <person name="Miner T.L."/>
            <person name="Nash W.E."/>
            <person name="Kremitzki C."/>
            <person name="Oddy L."/>
            <person name="Du H."/>
            <person name="Sun H."/>
            <person name="Bradshaw-Cordum H."/>
            <person name="Ali J."/>
            <person name="Carter J."/>
            <person name="Cordes M."/>
            <person name="Harris A."/>
            <person name="Isak A."/>
            <person name="van Brunt A."/>
            <person name="Nguyen C."/>
            <person name="Du F."/>
            <person name="Courtney L."/>
            <person name="Kalicki J."/>
            <person name="Ozersky P."/>
            <person name="Abbott S."/>
            <person name="Armstrong J."/>
            <person name="Belter E.A."/>
            <person name="Caruso L."/>
            <person name="Cedroni M."/>
            <person name="Cotton M."/>
            <person name="Davidson T."/>
            <person name="Desai A."/>
            <person name="Elliott G."/>
            <person name="Erb T."/>
            <person name="Fronick C."/>
            <person name="Gaige T."/>
            <person name="Haakenson W."/>
            <person name="Haglund K."/>
            <person name="Holmes A."/>
            <person name="Harkins R."/>
            <person name="Kim K."/>
            <person name="Kruchowski S.S."/>
            <person name="Strong C.M."/>
            <person name="Grewal N."/>
            <person name="Goyea E."/>
            <person name="Hou S."/>
            <person name="Levy A."/>
            <person name="Martinka S."/>
            <person name="Mead K."/>
            <person name="McLellan M.D."/>
            <person name="Meyer R."/>
            <person name="Randall-Maher J."/>
            <person name="Tomlinson C."/>
            <person name="Dauphin-Kohlberg S."/>
            <person name="Kozlowicz-Reilly A."/>
            <person name="Shah N."/>
            <person name="Swearengen-Shahid S."/>
            <person name="Snider J."/>
            <person name="Strong J.T."/>
            <person name="Thompson J."/>
            <person name="Yoakum M."/>
            <person name="Leonard S."/>
            <person name="Pearman C."/>
            <person name="Trani L."/>
            <person name="Radionenko M."/>
            <person name="Waligorski J.E."/>
            <person name="Wang C."/>
            <person name="Rock S.M."/>
            <person name="Tin-Wollam A.-M."/>
            <person name="Maupin R."/>
            <person name="Latreille P."/>
            <person name="Wendl M.C."/>
            <person name="Yang S.-P."/>
            <person name="Pohl C."/>
            <person name="Wallis J.W."/>
            <person name="Spieth J."/>
            <person name="Bieri T.A."/>
            <person name="Berkowicz N."/>
            <person name="Nelson J.O."/>
            <person name="Osborne J."/>
            <person name="Ding L."/>
            <person name="Meyer R."/>
            <person name="Sabo A."/>
            <person name="Shotland Y."/>
            <person name="Sinha P."/>
            <person name="Wohldmann P.E."/>
            <person name="Cook L.L."/>
            <person name="Hickenbotham M.T."/>
            <person name="Eldred J."/>
            <person name="Williams D."/>
            <person name="Jones T.A."/>
            <person name="She X."/>
            <person name="Ciccarelli F.D."/>
            <person name="Izaurralde E."/>
            <person name="Taylor J."/>
            <person name="Schmutz J."/>
            <person name="Myers R.M."/>
            <person name="Cox D.R."/>
            <person name="Huang X."/>
            <person name="McPherson J.D."/>
            <person name="Mardis E.R."/>
            <person name="Clifton S.W."/>
            <person name="Warren W.C."/>
            <person name="Chinwalla A.T."/>
            <person name="Eddy S.R."/>
            <person name="Marra M.A."/>
            <person name="Ovcharenko I."/>
            <person name="Furey T.S."/>
            <person name="Miller W."/>
            <person name="Eichler E.E."/>
            <person name="Bork P."/>
            <person name="Suyama M."/>
            <person name="Torrents D."/>
            <person name="Waterston R.H."/>
            <person name="Wilson R.K."/>
        </authorList>
    </citation>
    <scope>NUCLEOTIDE SEQUENCE [LARGE SCALE GENOMIC DNA]</scope>
</reference>
<reference key="6">
    <citation type="journal article" date="2004" name="Genome Res.">
        <title>The status, quality, and expansion of the NIH full-length cDNA project: the Mammalian Gene Collection (MGC).</title>
        <authorList>
            <consortium name="The MGC Project Team"/>
        </authorList>
    </citation>
    <scope>NUCLEOTIDE SEQUENCE [LARGE SCALE MRNA] (ISOFORM 1)</scope>
    <source>
        <tissue>Kidney</tissue>
        <tissue>Pancreas</tissue>
    </source>
</reference>
<reference key="7">
    <citation type="journal article" date="2001" name="Curr. Cancer Drug Targets">
        <title>Drug target discovery by gene expression analysis: cell cycle genes.</title>
        <authorList>
            <person name="Walker M.G."/>
        </authorList>
    </citation>
    <scope>NUCLEOTIDE SEQUENCE [MRNA] OF 90-371</scope>
</reference>
<reference key="8">
    <citation type="journal article" date="2005" name="Cancer Res.">
        <title>The Myc target gene JPO1/CDCA7 is frequently overexpressed in human tumors and has limited transforming activity in vivo.</title>
        <authorList>
            <person name="Osthus R.C."/>
            <person name="Karim B."/>
            <person name="Prescott J.E."/>
            <person name="Smith B.D."/>
            <person name="McDevitt M."/>
            <person name="Huso D.L."/>
            <person name="Dang C.V."/>
        </authorList>
    </citation>
    <scope>FUNCTION</scope>
    <scope>TISSUE SPECIFICITY</scope>
</reference>
<reference key="9">
    <citation type="journal article" date="2006" name="Biochim. Biophys. Acta">
        <title>JPO1/CDCA7, a novel transcription factor E2F1-induced protein, possesses intrinsic transcriptional regulator activity.</title>
        <authorList>
            <person name="Goto Y."/>
            <person name="Hayashi R."/>
            <person name="Muramatsu T."/>
            <person name="Ogawa H."/>
            <person name="Eguchi I."/>
            <person name="Oshida Y."/>
            <person name="Ohtani K."/>
            <person name="Yoshida K."/>
        </authorList>
    </citation>
    <scope>FUNCTION</scope>
    <scope>REGION</scope>
</reference>
<reference key="10">
    <citation type="journal article" date="2011" name="Sci. Signal.">
        <title>System-wide temporal characterization of the proteome and phosphoproteome of human embryonic stem cell differentiation.</title>
        <authorList>
            <person name="Rigbolt K.T."/>
            <person name="Prokhorova T.A."/>
            <person name="Akimov V."/>
            <person name="Henningsen J."/>
            <person name="Johansen P.T."/>
            <person name="Kratchmarova I."/>
            <person name="Kassem M."/>
            <person name="Mann M."/>
            <person name="Olsen J.V."/>
            <person name="Blagoev B."/>
        </authorList>
    </citation>
    <scope>PHOSPHORYLATION [LARGE SCALE ANALYSIS] AT SER-190</scope>
    <scope>IDENTIFICATION BY MASS SPECTROMETRY [LARGE SCALE ANALYSIS]</scope>
</reference>
<reference key="11">
    <citation type="journal article" date="2013" name="J. Proteome Res.">
        <title>Toward a comprehensive characterization of a human cancer cell phosphoproteome.</title>
        <authorList>
            <person name="Zhou H."/>
            <person name="Di Palma S."/>
            <person name="Preisinger C."/>
            <person name="Peng M."/>
            <person name="Polat A.N."/>
            <person name="Heck A.J."/>
            <person name="Mohammed S."/>
        </authorList>
    </citation>
    <scope>PHOSPHORYLATION [LARGE SCALE ANALYSIS] AT SER-142 AND THR-163</scope>
    <scope>IDENTIFICATION BY MASS SPECTROMETRY [LARGE SCALE ANALYSIS]</scope>
    <source>
        <tissue>Cervix carcinoma</tissue>
        <tissue>Erythroleukemia</tissue>
    </source>
</reference>
<reference key="12">
    <citation type="journal article" date="2013" name="Mol. Cell. Biol.">
        <title>The MYC-associated protein CDCA7 is phosphorylated by AKT to regulate MYC-dependent apoptosis and transformation.</title>
        <authorList>
            <person name="Gill R.M."/>
            <person name="Gabor T.V."/>
            <person name="Couzens A.L."/>
            <person name="Scheid M.P."/>
        </authorList>
    </citation>
    <scope>FUNCTION</scope>
    <scope>INTERACTION WITH MYC; YWHAE AND YWHAZ</scope>
    <scope>SUBCELLULAR LOCATION</scope>
    <scope>NUCLEAR LOCALIZATION SIGNAL</scope>
    <scope>PHOSPHORYLATION AT THR-163</scope>
    <scope>MUTAGENESIS OF ARG-158; PRO-159; ARG-160; ARG-161; ARG-162; THR-163; PHE-164; PRO-165; ARG-171; ARG-176; ARG-182 AND ARG-184</scope>
</reference>
<reference key="13">
    <citation type="journal article" date="2015" name="Nat. Commun.">
        <title>Mutations in CDCA7 and HELLS cause immunodeficiency-centromeric instability-facial anomalies syndrome.</title>
        <authorList>
            <person name="Thijssen P.E."/>
            <person name="Ito Y."/>
            <person name="Grillo G."/>
            <person name="Wang J."/>
            <person name="Velasco G."/>
            <person name="Nitta H."/>
            <person name="Unoki M."/>
            <person name="Yoshihara M."/>
            <person name="Suyama M."/>
            <person name="Sun Y."/>
            <person name="Lemmers R.J."/>
            <person name="de Greef J.C."/>
            <person name="Gennery A."/>
            <person name="Picco P."/>
            <person name="Kloeckener-Gruissem B."/>
            <person name="Guengoer T."/>
            <person name="Reisli I."/>
            <person name="Picard C."/>
            <person name="Kebaili K."/>
            <person name="Roquelaure B."/>
            <person name="Iwai T."/>
            <person name="Kondo I."/>
            <person name="Kubota T."/>
            <person name="van Ostaijen-Ten Dam M.M."/>
            <person name="van Tol M.J."/>
            <person name="Weemaes C."/>
            <person name="Francastel C."/>
            <person name="van der Maarel S.M."/>
            <person name="Sasaki H."/>
        </authorList>
    </citation>
    <scope>INVOLVEMENT IN ICF3</scope>
    <scope>VARIANTS ICF3 CYS-274; HIS-274; VAL-294 AND HIS-304</scope>
</reference>
<reference key="14">
    <citation type="journal article" date="2017" name="Nat. Struct. Mol. Biol.">
        <title>Site-specific mapping of the human SUMO proteome reveals co-modification with phosphorylation.</title>
        <authorList>
            <person name="Hendriks I.A."/>
            <person name="Lyon D."/>
            <person name="Young C."/>
            <person name="Jensen L.J."/>
            <person name="Vertegaal A.C."/>
            <person name="Nielsen M.L."/>
        </authorList>
    </citation>
    <scope>SUMOYLATION [LARGE SCALE ANALYSIS] AT LYS-204</scope>
    <scope>IDENTIFICATION BY MASS SPECTROMETRY [LARGE SCALE ANALYSIS]</scope>
</reference>
<feature type="chain" id="PRO_0000249310" description="Cell division cycle-associated protein 7">
    <location>
        <begin position="1"/>
        <end position="371"/>
    </location>
</feature>
<feature type="region of interest" description="Disordered" evidence="1">
    <location>
        <begin position="60"/>
        <end position="110"/>
    </location>
</feature>
<feature type="region of interest" description="Disordered" evidence="1">
    <location>
        <begin position="140"/>
        <end position="188"/>
    </location>
</feature>
<feature type="region of interest" description="Interaction with MYC" evidence="5">
    <location>
        <begin position="146"/>
        <end position="170"/>
    </location>
</feature>
<feature type="region of interest" description="Mediates transcriptional activity">
    <location>
        <begin position="247"/>
        <end position="371"/>
    </location>
</feature>
<feature type="short sequence motif" description="Nuclear localization signal" evidence="5">
    <location>
        <begin position="160"/>
        <end position="176"/>
    </location>
</feature>
<feature type="compositionally biased region" description="Polar residues" evidence="1">
    <location>
        <begin position="94"/>
        <end position="103"/>
    </location>
</feature>
<feature type="modified residue" description="Phosphoserine" evidence="11">
    <location>
        <position position="142"/>
    </location>
</feature>
<feature type="modified residue" description="Phosphothreonine" evidence="5 11">
    <location>
        <position position="163"/>
    </location>
</feature>
<feature type="modified residue" description="Phosphoserine" evidence="10">
    <location>
        <position position="190"/>
    </location>
</feature>
<feature type="cross-link" description="Glycyl lysine isopeptide (Lys-Gly) (interchain with G-Cter in SUMO2)" evidence="12">
    <location>
        <position position="204"/>
    </location>
</feature>
<feature type="splice variant" id="VSP_054407" description="In isoform 5." evidence="7">
    <location>
        <begin position="8"/>
        <end position="49"/>
    </location>
</feature>
<feature type="splice variant" id="VSP_020394" description="In isoform 2." evidence="7">
    <original>T</original>
    <variation>TKPKFRSDISEELANVFYEDSDNESFCGFSESEVQDVLDHCGFLQKPRPDVTNELAGIFHADSDDESFCGFSESEIQDGM</variation>
    <location>
        <position position="49"/>
    </location>
</feature>
<feature type="splice variant" id="VSP_054408" description="In isoform 6." evidence="7">
    <original>T</original>
    <variation>TKPRPDVTNELAGIFHADSDDESFCGFSESEIQDGM</variation>
    <location>
        <position position="49"/>
    </location>
</feature>
<feature type="splice variant" id="VSP_020395" description="In isoform 4." evidence="7">
    <original>QSRRPRRRTFPGVASRRNPERRARPLTRSRSRILGSLDALPMEEEEEEDKYML</original>
    <variation>VSTSSCLYTVVFWAHLRSICVVFKNLISLFVWPSRQTKGTQRKPPDRSLDDPP</variation>
    <location>
        <begin position="155"/>
        <end position="207"/>
    </location>
</feature>
<feature type="splice variant" id="VSP_020396" description="In isoform 4." evidence="7">
    <location>
        <begin position="208"/>
        <end position="371"/>
    </location>
</feature>
<feature type="splice variant" id="VSP_020397" description="In isoform 3." evidence="8">
    <location>
        <begin position="267"/>
        <end position="316"/>
    </location>
</feature>
<feature type="sequence variant" id="VAR_076578" description="In ICF3; dbSNP:rs879253738." evidence="6">
    <original>R</original>
    <variation>C</variation>
    <location>
        <position position="274"/>
    </location>
</feature>
<feature type="sequence variant" id="VAR_076579" description="In ICF3; dbSNP:rs370384522." evidence="6">
    <original>R</original>
    <variation>H</variation>
    <location>
        <position position="274"/>
    </location>
</feature>
<feature type="sequence variant" id="VAR_076580" description="In ICF3; uncertain significance." evidence="6">
    <original>G</original>
    <variation>V</variation>
    <location>
        <position position="294"/>
    </location>
</feature>
<feature type="sequence variant" id="VAR_076581" description="In ICF3; uncertain significance; dbSNP:rs772929976." evidence="6">
    <original>R</original>
    <variation>H</variation>
    <location>
        <position position="304"/>
    </location>
</feature>
<feature type="mutagenesis site" description="Does not affect phosphorylation or interaction with YHWAE and YHWAZ." evidence="5">
    <original>R</original>
    <variation>A</variation>
    <location>
        <position position="158"/>
    </location>
</feature>
<feature type="mutagenesis site" description="Does not affect phosphorylation or interaction with YHWAE and YHWAZ." evidence="5">
    <original>P</original>
    <variation>A</variation>
    <location>
        <position position="159"/>
    </location>
</feature>
<feature type="mutagenesis site" description="Abolishes phosphorylation and interaction with YHWAE and YHWAZ." evidence="5">
    <original>R</original>
    <variation>A</variation>
    <location>
        <position position="160"/>
    </location>
</feature>
<feature type="mutagenesis site" description="Predominantly cytoplasmic." evidence="5">
    <original>R</original>
    <variation>E</variation>
    <location>
        <position position="160"/>
    </location>
</feature>
<feature type="mutagenesis site" description="Increased phosphorylation, binding to YHWAE and YHWAZ, and cytoplasmic expression." evidence="5">
    <original>R</original>
    <variation>A</variation>
    <location>
        <position position="161"/>
    </location>
</feature>
<feature type="mutagenesis site" description="Predominantly cytoplasmic." evidence="5">
    <original>R</original>
    <variation>E</variation>
    <location>
        <position position="161"/>
    </location>
</feature>
<feature type="mutagenesis site" description="Does not affect phosphorylation or interaction with YHWAE and YHWAZ." evidence="5">
    <original>R</original>
    <variation>A</variation>
    <location>
        <position position="162"/>
    </location>
</feature>
<feature type="mutagenesis site" description="Predominantly cytoplasmic." evidence="5">
    <original>R</original>
    <variation>E</variation>
    <location>
        <position position="162"/>
    </location>
</feature>
<feature type="mutagenesis site" description="Abolishes phosphorylation, interaction with YHWAE and YHWAZ, and cytoplasmic localization." evidence="5">
    <original>T</original>
    <variation>A</variation>
    <location>
        <position position="163"/>
    </location>
</feature>
<feature type="mutagenesis site" description="Abolishes phosphorylation and interaction with YHWAE and YHWAZ." evidence="5">
    <original>F</original>
    <variation>A</variation>
    <location>
        <position position="164"/>
    </location>
</feature>
<feature type="mutagenesis site" description="Abolishes phosphorylation, interaction with YHWAE and YHWAZ, and cytoplasmic localization." evidence="5">
    <original>P</original>
    <variation>A</variation>
    <location>
        <position position="165"/>
    </location>
</feature>
<feature type="mutagenesis site" description="Predominantly cytoplasmic. Completely cytoplasmic with no nuclear expression; when associated with E-176." evidence="5">
    <original>R</original>
    <variation>E</variation>
    <location>
        <position position="171"/>
    </location>
</feature>
<feature type="mutagenesis site" description="Predominantly cytoplasmic. Completely cytoplasmic with no nuclear expression; when associated with E-171." evidence="5">
    <original>R</original>
    <variation>E</variation>
    <location>
        <position position="176"/>
    </location>
</feature>
<feature type="mutagenesis site" description="No effect on subcellular location." evidence="5">
    <original>R</original>
    <variation>E</variation>
    <location>
        <position position="182"/>
    </location>
</feature>
<feature type="mutagenesis site" description="No effect on subcellular location." evidence="5">
    <original>R</original>
    <variation>E</variation>
    <location>
        <position position="184"/>
    </location>
</feature>
<feature type="sequence conflict" description="In Ref. 6; AAH15124." evidence="9" ref="6">
    <original>S</original>
    <variation>G</variation>
    <location>
        <position position="152"/>
    </location>
</feature>
<feature type="sequence conflict" description="In Ref. 3; BAD97244." evidence="9" ref="3">
    <original>C</original>
    <variation>W</variation>
    <location>
        <position position="320"/>
    </location>
</feature>
<feature type="helix" evidence="13">
    <location>
        <begin position="242"/>
        <end position="244"/>
    </location>
</feature>
<feature type="helix" evidence="13">
    <location>
        <begin position="247"/>
        <end position="251"/>
    </location>
</feature>
<feature type="helix" evidence="13">
    <location>
        <begin position="257"/>
        <end position="259"/>
    </location>
</feature>
<feature type="turn" evidence="13">
    <location>
        <begin position="264"/>
        <end position="266"/>
    </location>
</feature>
<feature type="turn" evidence="13">
    <location>
        <begin position="271"/>
        <end position="273"/>
    </location>
</feature>
<feature type="strand" evidence="13">
    <location>
        <begin position="276"/>
        <end position="280"/>
    </location>
</feature>
<feature type="turn" evidence="13">
    <location>
        <begin position="291"/>
        <end position="294"/>
    </location>
</feature>
<feature type="helix" evidence="13">
    <location>
        <begin position="298"/>
        <end position="305"/>
    </location>
</feature>
<feature type="helix" evidence="13">
    <location>
        <begin position="309"/>
        <end position="313"/>
    </location>
</feature>
<feature type="turn" evidence="13">
    <location>
        <begin position="321"/>
        <end position="325"/>
    </location>
</feature>
<feature type="turn" evidence="13">
    <location>
        <begin position="330"/>
        <end position="334"/>
    </location>
</feature>
<feature type="sequence conflict" description="In Ref. 2; BAB55245." evidence="9" ref="2">
    <original>N</original>
    <variation>S</variation>
    <location sequence="Q9BWT1-2">
        <position position="63"/>
    </location>
</feature>
<protein>
    <recommendedName>
        <fullName>Cell division cycle-associated protein 7</fullName>
    </recommendedName>
    <alternativeName>
        <fullName>Protein JPO1</fullName>
    </alternativeName>
</protein>